<feature type="chain" id="PRO_0000293255" description="Small ribosomal subunit protein uS4">
    <location>
        <begin position="1"/>
        <end position="208"/>
    </location>
</feature>
<feature type="domain" description="S4 RNA-binding" evidence="1">
    <location>
        <begin position="98"/>
        <end position="163"/>
    </location>
</feature>
<protein>
    <recommendedName>
        <fullName evidence="1">Small ribosomal subunit protein uS4</fullName>
    </recommendedName>
    <alternativeName>
        <fullName evidence="2">30S ribosomal protein S4</fullName>
    </alternativeName>
</protein>
<gene>
    <name evidence="1" type="primary">rpsD</name>
    <name type="ordered locus">CJJ81176_1581</name>
</gene>
<reference key="1">
    <citation type="submission" date="2006-12" db="EMBL/GenBank/DDBJ databases">
        <authorList>
            <person name="Fouts D.E."/>
            <person name="Nelson K.E."/>
            <person name="Sebastian Y."/>
        </authorList>
    </citation>
    <scope>NUCLEOTIDE SEQUENCE [LARGE SCALE GENOMIC DNA]</scope>
    <source>
        <strain>81-176</strain>
    </source>
</reference>
<keyword id="KW-0687">Ribonucleoprotein</keyword>
<keyword id="KW-0689">Ribosomal protein</keyword>
<keyword id="KW-0694">RNA-binding</keyword>
<keyword id="KW-0699">rRNA-binding</keyword>
<sequence>MARYRGPVEKLERRFGVSLALKGERRLAGKSALDKRPYAPGQHGARKGKISEYGLQLREKQKAKFMYGVSEKQFRRLFAEAARREGNTGVLLIQLLEQRLDNVVYRMGFATTRRFARQLVTHGHVLVNGKRVDIPSFRVEAGAKIEIIEKSKNNPQITRAIELTAQTGIVAWVDVEKDKRFGIFTRKPEREEVVIPVEERFIVELYSK</sequence>
<proteinExistence type="inferred from homology"/>
<accession>A1W1J6</accession>
<organism>
    <name type="scientific">Campylobacter jejuni subsp. jejuni serotype O:23/36 (strain 81-176)</name>
    <dbReference type="NCBI Taxonomy" id="354242"/>
    <lineage>
        <taxon>Bacteria</taxon>
        <taxon>Pseudomonadati</taxon>
        <taxon>Campylobacterota</taxon>
        <taxon>Epsilonproteobacteria</taxon>
        <taxon>Campylobacterales</taxon>
        <taxon>Campylobacteraceae</taxon>
        <taxon>Campylobacter</taxon>
    </lineage>
</organism>
<comment type="function">
    <text evidence="1">One of the primary rRNA binding proteins, it binds directly to 16S rRNA where it nucleates assembly of the body of the 30S subunit.</text>
</comment>
<comment type="function">
    <text evidence="1">With S5 and S12 plays an important role in translational accuracy.</text>
</comment>
<comment type="subunit">
    <text evidence="1">Part of the 30S ribosomal subunit. Contacts protein S5. The interaction surface between S4 and S5 is involved in control of translational fidelity.</text>
</comment>
<comment type="similarity">
    <text evidence="1">Belongs to the universal ribosomal protein uS4 family.</text>
</comment>
<evidence type="ECO:0000255" key="1">
    <source>
        <dbReference type="HAMAP-Rule" id="MF_01306"/>
    </source>
</evidence>
<evidence type="ECO:0000305" key="2"/>
<name>RS4_CAMJJ</name>
<dbReference type="EMBL" id="CP000538">
    <property type="protein sequence ID" value="EAQ72764.1"/>
    <property type="molecule type" value="Genomic_DNA"/>
</dbReference>
<dbReference type="RefSeq" id="WP_002856574.1">
    <property type="nucleotide sequence ID" value="NC_008787.1"/>
</dbReference>
<dbReference type="SMR" id="A1W1J6"/>
<dbReference type="KEGG" id="cjj:CJJ81176_1581"/>
<dbReference type="eggNOG" id="COG0522">
    <property type="taxonomic scope" value="Bacteria"/>
</dbReference>
<dbReference type="HOGENOM" id="CLU_092403_0_2_7"/>
<dbReference type="Proteomes" id="UP000000646">
    <property type="component" value="Chromosome"/>
</dbReference>
<dbReference type="GO" id="GO:0015935">
    <property type="term" value="C:small ribosomal subunit"/>
    <property type="evidence" value="ECO:0007669"/>
    <property type="project" value="InterPro"/>
</dbReference>
<dbReference type="GO" id="GO:0019843">
    <property type="term" value="F:rRNA binding"/>
    <property type="evidence" value="ECO:0007669"/>
    <property type="project" value="UniProtKB-UniRule"/>
</dbReference>
<dbReference type="GO" id="GO:0003735">
    <property type="term" value="F:structural constituent of ribosome"/>
    <property type="evidence" value="ECO:0007669"/>
    <property type="project" value="InterPro"/>
</dbReference>
<dbReference type="GO" id="GO:0042274">
    <property type="term" value="P:ribosomal small subunit biogenesis"/>
    <property type="evidence" value="ECO:0007669"/>
    <property type="project" value="TreeGrafter"/>
</dbReference>
<dbReference type="GO" id="GO:0006412">
    <property type="term" value="P:translation"/>
    <property type="evidence" value="ECO:0007669"/>
    <property type="project" value="UniProtKB-UniRule"/>
</dbReference>
<dbReference type="CDD" id="cd00165">
    <property type="entry name" value="S4"/>
    <property type="match status" value="1"/>
</dbReference>
<dbReference type="FunFam" id="1.10.1050.10:FF:000001">
    <property type="entry name" value="30S ribosomal protein S4"/>
    <property type="match status" value="1"/>
</dbReference>
<dbReference type="FunFam" id="3.10.290.10:FF:000001">
    <property type="entry name" value="30S ribosomal protein S4"/>
    <property type="match status" value="1"/>
</dbReference>
<dbReference type="Gene3D" id="1.10.1050.10">
    <property type="entry name" value="Ribosomal Protein S4 Delta 41, Chain A, domain 1"/>
    <property type="match status" value="1"/>
</dbReference>
<dbReference type="Gene3D" id="3.10.290.10">
    <property type="entry name" value="RNA-binding S4 domain"/>
    <property type="match status" value="1"/>
</dbReference>
<dbReference type="HAMAP" id="MF_01306_B">
    <property type="entry name" value="Ribosomal_uS4_B"/>
    <property type="match status" value="1"/>
</dbReference>
<dbReference type="InterPro" id="IPR022801">
    <property type="entry name" value="Ribosomal_uS4"/>
</dbReference>
<dbReference type="InterPro" id="IPR005709">
    <property type="entry name" value="Ribosomal_uS4_bac-type"/>
</dbReference>
<dbReference type="InterPro" id="IPR018079">
    <property type="entry name" value="Ribosomal_uS4_CS"/>
</dbReference>
<dbReference type="InterPro" id="IPR001912">
    <property type="entry name" value="Ribosomal_uS4_N"/>
</dbReference>
<dbReference type="InterPro" id="IPR002942">
    <property type="entry name" value="S4_RNA-bd"/>
</dbReference>
<dbReference type="InterPro" id="IPR036986">
    <property type="entry name" value="S4_RNA-bd_sf"/>
</dbReference>
<dbReference type="NCBIfam" id="NF003717">
    <property type="entry name" value="PRK05327.1"/>
    <property type="match status" value="1"/>
</dbReference>
<dbReference type="NCBIfam" id="TIGR01017">
    <property type="entry name" value="rpsD_bact"/>
    <property type="match status" value="1"/>
</dbReference>
<dbReference type="PANTHER" id="PTHR11831">
    <property type="entry name" value="30S 40S RIBOSOMAL PROTEIN"/>
    <property type="match status" value="1"/>
</dbReference>
<dbReference type="PANTHER" id="PTHR11831:SF4">
    <property type="entry name" value="SMALL RIBOSOMAL SUBUNIT PROTEIN US4M"/>
    <property type="match status" value="1"/>
</dbReference>
<dbReference type="Pfam" id="PF00163">
    <property type="entry name" value="Ribosomal_S4"/>
    <property type="match status" value="1"/>
</dbReference>
<dbReference type="Pfam" id="PF01479">
    <property type="entry name" value="S4"/>
    <property type="match status" value="1"/>
</dbReference>
<dbReference type="SMART" id="SM01390">
    <property type="entry name" value="Ribosomal_S4"/>
    <property type="match status" value="1"/>
</dbReference>
<dbReference type="SMART" id="SM00363">
    <property type="entry name" value="S4"/>
    <property type="match status" value="1"/>
</dbReference>
<dbReference type="SUPFAM" id="SSF55174">
    <property type="entry name" value="Alpha-L RNA-binding motif"/>
    <property type="match status" value="1"/>
</dbReference>
<dbReference type="PROSITE" id="PS00632">
    <property type="entry name" value="RIBOSOMAL_S4"/>
    <property type="match status" value="1"/>
</dbReference>
<dbReference type="PROSITE" id="PS50889">
    <property type="entry name" value="S4"/>
    <property type="match status" value="1"/>
</dbReference>